<evidence type="ECO:0000255" key="1">
    <source>
        <dbReference type="HAMAP-Rule" id="MF_00097"/>
    </source>
</evidence>
<dbReference type="EC" id="2.5.1.3" evidence="1"/>
<dbReference type="EMBL" id="AE007870">
    <property type="protein sequence ID" value="AAK90101.2"/>
    <property type="molecule type" value="Genomic_DNA"/>
</dbReference>
<dbReference type="PIR" id="AC2961">
    <property type="entry name" value="AC2961"/>
</dbReference>
<dbReference type="PIR" id="C98322">
    <property type="entry name" value="C98322"/>
</dbReference>
<dbReference type="RefSeq" id="NP_357316.2">
    <property type="nucleotide sequence ID" value="NC_003063.2"/>
</dbReference>
<dbReference type="RefSeq" id="WP_010972915.1">
    <property type="nucleotide sequence ID" value="NC_003063.2"/>
</dbReference>
<dbReference type="SMR" id="Q8UAS8"/>
<dbReference type="STRING" id="176299.Atu3289"/>
<dbReference type="EnsemblBacteria" id="AAK90101">
    <property type="protein sequence ID" value="AAK90101"/>
    <property type="gene ID" value="Atu3289"/>
</dbReference>
<dbReference type="GeneID" id="1135163"/>
<dbReference type="KEGG" id="atu:Atu3289"/>
<dbReference type="PATRIC" id="fig|176299.10.peg.3130"/>
<dbReference type="eggNOG" id="COG0352">
    <property type="taxonomic scope" value="Bacteria"/>
</dbReference>
<dbReference type="HOGENOM" id="CLU_018272_3_2_5"/>
<dbReference type="OrthoDB" id="9810880at2"/>
<dbReference type="PhylomeDB" id="Q8UAS8"/>
<dbReference type="BioCyc" id="AGRO:ATU3289-MONOMER"/>
<dbReference type="UniPathway" id="UPA00060">
    <property type="reaction ID" value="UER00141"/>
</dbReference>
<dbReference type="Proteomes" id="UP000000813">
    <property type="component" value="Chromosome linear"/>
</dbReference>
<dbReference type="GO" id="GO:0005737">
    <property type="term" value="C:cytoplasm"/>
    <property type="evidence" value="ECO:0007669"/>
    <property type="project" value="TreeGrafter"/>
</dbReference>
<dbReference type="GO" id="GO:0000287">
    <property type="term" value="F:magnesium ion binding"/>
    <property type="evidence" value="ECO:0007669"/>
    <property type="project" value="UniProtKB-UniRule"/>
</dbReference>
<dbReference type="GO" id="GO:0004789">
    <property type="term" value="F:thiamine-phosphate diphosphorylase activity"/>
    <property type="evidence" value="ECO:0007669"/>
    <property type="project" value="UniProtKB-UniRule"/>
</dbReference>
<dbReference type="GO" id="GO:0009228">
    <property type="term" value="P:thiamine biosynthetic process"/>
    <property type="evidence" value="ECO:0007669"/>
    <property type="project" value="UniProtKB-KW"/>
</dbReference>
<dbReference type="GO" id="GO:0009229">
    <property type="term" value="P:thiamine diphosphate biosynthetic process"/>
    <property type="evidence" value="ECO:0007669"/>
    <property type="project" value="UniProtKB-UniRule"/>
</dbReference>
<dbReference type="CDD" id="cd00564">
    <property type="entry name" value="TMP_TenI"/>
    <property type="match status" value="1"/>
</dbReference>
<dbReference type="Gene3D" id="3.20.20.70">
    <property type="entry name" value="Aldolase class I"/>
    <property type="match status" value="1"/>
</dbReference>
<dbReference type="HAMAP" id="MF_00097">
    <property type="entry name" value="TMP_synthase"/>
    <property type="match status" value="1"/>
</dbReference>
<dbReference type="InterPro" id="IPR013785">
    <property type="entry name" value="Aldolase_TIM"/>
</dbReference>
<dbReference type="InterPro" id="IPR036206">
    <property type="entry name" value="ThiamineP_synth_sf"/>
</dbReference>
<dbReference type="InterPro" id="IPR022998">
    <property type="entry name" value="ThiamineP_synth_TenI"/>
</dbReference>
<dbReference type="InterPro" id="IPR034291">
    <property type="entry name" value="TMP_synthase"/>
</dbReference>
<dbReference type="NCBIfam" id="TIGR00693">
    <property type="entry name" value="thiE"/>
    <property type="match status" value="1"/>
</dbReference>
<dbReference type="PANTHER" id="PTHR20857">
    <property type="entry name" value="THIAMINE-PHOSPHATE PYROPHOSPHORYLASE"/>
    <property type="match status" value="1"/>
</dbReference>
<dbReference type="PANTHER" id="PTHR20857:SF15">
    <property type="entry name" value="THIAMINE-PHOSPHATE SYNTHASE"/>
    <property type="match status" value="1"/>
</dbReference>
<dbReference type="Pfam" id="PF02581">
    <property type="entry name" value="TMP-TENI"/>
    <property type="match status" value="1"/>
</dbReference>
<dbReference type="SUPFAM" id="SSF51391">
    <property type="entry name" value="Thiamin phosphate synthase"/>
    <property type="match status" value="1"/>
</dbReference>
<proteinExistence type="inferred from homology"/>
<accession>Q8UAS8</accession>
<name>THIE_AGRFC</name>
<sequence length="220" mass="22880">MNKVDYRLNALVDASLADVAPLPELALAAALNGATILQYRDKHGSTREMIENARAIREAIGGTGVPLVINDRVDVALASGADGVHLGADDMDAKTARRILGEKAIIGLTVKNRADAERAASMPADYACIGGVFETVSKVNPDKPVGIEGFTTLRALLKEWQPDMPVGAIAGIDLDRVPAVIAAGADGVAVISAIFRAANIASATSDFRSAIDAALKARQP</sequence>
<gene>
    <name evidence="1" type="primary">thiE</name>
    <name type="ordered locus">Atu3289</name>
    <name type="ORF">AGR_L_3059</name>
</gene>
<reference key="1">
    <citation type="journal article" date="2001" name="Science">
        <title>The genome of the natural genetic engineer Agrobacterium tumefaciens C58.</title>
        <authorList>
            <person name="Wood D.W."/>
            <person name="Setubal J.C."/>
            <person name="Kaul R."/>
            <person name="Monks D.E."/>
            <person name="Kitajima J.P."/>
            <person name="Okura V.K."/>
            <person name="Zhou Y."/>
            <person name="Chen L."/>
            <person name="Wood G.E."/>
            <person name="Almeida N.F. Jr."/>
            <person name="Woo L."/>
            <person name="Chen Y."/>
            <person name="Paulsen I.T."/>
            <person name="Eisen J.A."/>
            <person name="Karp P.D."/>
            <person name="Bovee D. Sr."/>
            <person name="Chapman P."/>
            <person name="Clendenning J."/>
            <person name="Deatherage G."/>
            <person name="Gillet W."/>
            <person name="Grant C."/>
            <person name="Kutyavin T."/>
            <person name="Levy R."/>
            <person name="Li M.-J."/>
            <person name="McClelland E."/>
            <person name="Palmieri A."/>
            <person name="Raymond C."/>
            <person name="Rouse G."/>
            <person name="Saenphimmachak C."/>
            <person name="Wu Z."/>
            <person name="Romero P."/>
            <person name="Gordon D."/>
            <person name="Zhang S."/>
            <person name="Yoo H."/>
            <person name="Tao Y."/>
            <person name="Biddle P."/>
            <person name="Jung M."/>
            <person name="Krespan W."/>
            <person name="Perry M."/>
            <person name="Gordon-Kamm B."/>
            <person name="Liao L."/>
            <person name="Kim S."/>
            <person name="Hendrick C."/>
            <person name="Zhao Z.-Y."/>
            <person name="Dolan M."/>
            <person name="Chumley F."/>
            <person name="Tingey S.V."/>
            <person name="Tomb J.-F."/>
            <person name="Gordon M.P."/>
            <person name="Olson M.V."/>
            <person name="Nester E.W."/>
        </authorList>
    </citation>
    <scope>NUCLEOTIDE SEQUENCE [LARGE SCALE GENOMIC DNA]</scope>
    <source>
        <strain>C58 / ATCC 33970</strain>
    </source>
</reference>
<reference key="2">
    <citation type="journal article" date="2001" name="Science">
        <title>Genome sequence of the plant pathogen and biotechnology agent Agrobacterium tumefaciens C58.</title>
        <authorList>
            <person name="Goodner B."/>
            <person name="Hinkle G."/>
            <person name="Gattung S."/>
            <person name="Miller N."/>
            <person name="Blanchard M."/>
            <person name="Qurollo B."/>
            <person name="Goldman B.S."/>
            <person name="Cao Y."/>
            <person name="Askenazi M."/>
            <person name="Halling C."/>
            <person name="Mullin L."/>
            <person name="Houmiel K."/>
            <person name="Gordon J."/>
            <person name="Vaudin M."/>
            <person name="Iartchouk O."/>
            <person name="Epp A."/>
            <person name="Liu F."/>
            <person name="Wollam C."/>
            <person name="Allinger M."/>
            <person name="Doughty D."/>
            <person name="Scott C."/>
            <person name="Lappas C."/>
            <person name="Markelz B."/>
            <person name="Flanagan C."/>
            <person name="Crowell C."/>
            <person name="Gurson J."/>
            <person name="Lomo C."/>
            <person name="Sear C."/>
            <person name="Strub G."/>
            <person name="Cielo C."/>
            <person name="Slater S."/>
        </authorList>
    </citation>
    <scope>NUCLEOTIDE SEQUENCE [LARGE SCALE GENOMIC DNA]</scope>
    <source>
        <strain>C58 / ATCC 33970</strain>
    </source>
</reference>
<keyword id="KW-0460">Magnesium</keyword>
<keyword id="KW-0479">Metal-binding</keyword>
<keyword id="KW-1185">Reference proteome</keyword>
<keyword id="KW-0784">Thiamine biosynthesis</keyword>
<keyword id="KW-0808">Transferase</keyword>
<protein>
    <recommendedName>
        <fullName evidence="1">Thiamine-phosphate synthase</fullName>
        <shortName evidence="1">TP synthase</shortName>
        <shortName evidence="1">TPS</shortName>
        <ecNumber evidence="1">2.5.1.3</ecNumber>
    </recommendedName>
    <alternativeName>
        <fullName evidence="1">Thiamine-phosphate pyrophosphorylase</fullName>
        <shortName evidence="1">TMP pyrophosphorylase</shortName>
        <shortName evidence="1">TMP-PPase</shortName>
    </alternativeName>
</protein>
<organism>
    <name type="scientific">Agrobacterium fabrum (strain C58 / ATCC 33970)</name>
    <name type="common">Agrobacterium tumefaciens (strain C58)</name>
    <dbReference type="NCBI Taxonomy" id="176299"/>
    <lineage>
        <taxon>Bacteria</taxon>
        <taxon>Pseudomonadati</taxon>
        <taxon>Pseudomonadota</taxon>
        <taxon>Alphaproteobacteria</taxon>
        <taxon>Hyphomicrobiales</taxon>
        <taxon>Rhizobiaceae</taxon>
        <taxon>Rhizobium/Agrobacterium group</taxon>
        <taxon>Agrobacterium</taxon>
        <taxon>Agrobacterium tumefaciens complex</taxon>
    </lineage>
</organism>
<comment type="function">
    <text evidence="1">Condenses 4-methyl-5-(beta-hydroxyethyl)thiazole monophosphate (THZ-P) and 2-methyl-4-amino-5-hydroxymethyl pyrimidine pyrophosphate (HMP-PP) to form thiamine monophosphate (TMP).</text>
</comment>
<comment type="catalytic activity">
    <reaction evidence="1">
        <text>2-[(2R,5Z)-2-carboxy-4-methylthiazol-5(2H)-ylidene]ethyl phosphate + 4-amino-2-methyl-5-(diphosphooxymethyl)pyrimidine + 2 H(+) = thiamine phosphate + CO2 + diphosphate</text>
        <dbReference type="Rhea" id="RHEA:47844"/>
        <dbReference type="ChEBI" id="CHEBI:15378"/>
        <dbReference type="ChEBI" id="CHEBI:16526"/>
        <dbReference type="ChEBI" id="CHEBI:33019"/>
        <dbReference type="ChEBI" id="CHEBI:37575"/>
        <dbReference type="ChEBI" id="CHEBI:57841"/>
        <dbReference type="ChEBI" id="CHEBI:62899"/>
        <dbReference type="EC" id="2.5.1.3"/>
    </reaction>
</comment>
<comment type="catalytic activity">
    <reaction evidence="1">
        <text>2-(2-carboxy-4-methylthiazol-5-yl)ethyl phosphate + 4-amino-2-methyl-5-(diphosphooxymethyl)pyrimidine + 2 H(+) = thiamine phosphate + CO2 + diphosphate</text>
        <dbReference type="Rhea" id="RHEA:47848"/>
        <dbReference type="ChEBI" id="CHEBI:15378"/>
        <dbReference type="ChEBI" id="CHEBI:16526"/>
        <dbReference type="ChEBI" id="CHEBI:33019"/>
        <dbReference type="ChEBI" id="CHEBI:37575"/>
        <dbReference type="ChEBI" id="CHEBI:57841"/>
        <dbReference type="ChEBI" id="CHEBI:62890"/>
        <dbReference type="EC" id="2.5.1.3"/>
    </reaction>
</comment>
<comment type="catalytic activity">
    <reaction evidence="1">
        <text>4-methyl-5-(2-phosphooxyethyl)-thiazole + 4-amino-2-methyl-5-(diphosphooxymethyl)pyrimidine + H(+) = thiamine phosphate + diphosphate</text>
        <dbReference type="Rhea" id="RHEA:22328"/>
        <dbReference type="ChEBI" id="CHEBI:15378"/>
        <dbReference type="ChEBI" id="CHEBI:33019"/>
        <dbReference type="ChEBI" id="CHEBI:37575"/>
        <dbReference type="ChEBI" id="CHEBI:57841"/>
        <dbReference type="ChEBI" id="CHEBI:58296"/>
        <dbReference type="EC" id="2.5.1.3"/>
    </reaction>
</comment>
<comment type="cofactor">
    <cofactor evidence="1">
        <name>Mg(2+)</name>
        <dbReference type="ChEBI" id="CHEBI:18420"/>
    </cofactor>
    <text evidence="1">Binds 1 Mg(2+) ion per subunit.</text>
</comment>
<comment type="pathway">
    <text evidence="1">Cofactor biosynthesis; thiamine diphosphate biosynthesis; thiamine phosphate from 4-amino-2-methyl-5-diphosphomethylpyrimidine and 4-methyl-5-(2-phosphoethyl)-thiazole: step 1/1.</text>
</comment>
<comment type="similarity">
    <text evidence="1">Belongs to the thiamine-phosphate synthase family.</text>
</comment>
<feature type="chain" id="PRO_0000156989" description="Thiamine-phosphate synthase">
    <location>
        <begin position="1"/>
        <end position="220"/>
    </location>
</feature>
<feature type="binding site" evidence="1">
    <location>
        <begin position="38"/>
        <end position="42"/>
    </location>
    <ligand>
        <name>4-amino-2-methyl-5-(diphosphooxymethyl)pyrimidine</name>
        <dbReference type="ChEBI" id="CHEBI:57841"/>
    </ligand>
</feature>
<feature type="binding site" evidence="1">
    <location>
        <position position="70"/>
    </location>
    <ligand>
        <name>4-amino-2-methyl-5-(diphosphooxymethyl)pyrimidine</name>
        <dbReference type="ChEBI" id="CHEBI:57841"/>
    </ligand>
</feature>
<feature type="binding site" evidence="1">
    <location>
        <position position="71"/>
    </location>
    <ligand>
        <name>Mg(2+)</name>
        <dbReference type="ChEBI" id="CHEBI:18420"/>
    </ligand>
</feature>
<feature type="binding site" evidence="1">
    <location>
        <position position="90"/>
    </location>
    <ligand>
        <name>Mg(2+)</name>
        <dbReference type="ChEBI" id="CHEBI:18420"/>
    </ligand>
</feature>
<feature type="binding site" evidence="1">
    <location>
        <position position="109"/>
    </location>
    <ligand>
        <name>4-amino-2-methyl-5-(diphosphooxymethyl)pyrimidine</name>
        <dbReference type="ChEBI" id="CHEBI:57841"/>
    </ligand>
</feature>
<feature type="binding site" evidence="1">
    <location>
        <begin position="135"/>
        <end position="137"/>
    </location>
    <ligand>
        <name>2-[(2R,5Z)-2-carboxy-4-methylthiazol-5(2H)-ylidene]ethyl phosphate</name>
        <dbReference type="ChEBI" id="CHEBI:62899"/>
    </ligand>
</feature>
<feature type="binding site" evidence="1">
    <location>
        <position position="138"/>
    </location>
    <ligand>
        <name>4-amino-2-methyl-5-(diphosphooxymethyl)pyrimidine</name>
        <dbReference type="ChEBI" id="CHEBI:57841"/>
    </ligand>
</feature>
<feature type="binding site" evidence="1">
    <location>
        <position position="171"/>
    </location>
    <ligand>
        <name>2-[(2R,5Z)-2-carboxy-4-methylthiazol-5(2H)-ylidene]ethyl phosphate</name>
        <dbReference type="ChEBI" id="CHEBI:62899"/>
    </ligand>
</feature>
<feature type="binding site" evidence="1">
    <location>
        <begin position="191"/>
        <end position="192"/>
    </location>
    <ligand>
        <name>2-[(2R,5Z)-2-carboxy-4-methylthiazol-5(2H)-ylidene]ethyl phosphate</name>
        <dbReference type="ChEBI" id="CHEBI:62899"/>
    </ligand>
</feature>